<protein>
    <recommendedName>
        <fullName>Protein MEI2-like 4</fullName>
        <shortName>AML4</shortName>
    </recommendedName>
    <alternativeName>
        <fullName>MEI2-like protein 4</fullName>
    </alternativeName>
</protein>
<accession>Q9LYN7</accession>
<evidence type="ECO:0000255" key="1">
    <source>
        <dbReference type="PROSITE-ProRule" id="PRU00176"/>
    </source>
</evidence>
<evidence type="ECO:0000256" key="2">
    <source>
        <dbReference type="SAM" id="MobiDB-lite"/>
    </source>
</evidence>
<evidence type="ECO:0000269" key="3">
    <source>
    </source>
</evidence>
<evidence type="ECO:0000269" key="4">
    <source>
    </source>
</evidence>
<evidence type="ECO:0000269" key="5">
    <source>
    </source>
</evidence>
<reference key="1">
    <citation type="journal article" date="2000" name="Nature">
        <title>Sequence and analysis of chromosome 5 of the plant Arabidopsis thaliana.</title>
        <authorList>
            <person name="Tabata S."/>
            <person name="Kaneko T."/>
            <person name="Nakamura Y."/>
            <person name="Kotani H."/>
            <person name="Kato T."/>
            <person name="Asamizu E."/>
            <person name="Miyajima N."/>
            <person name="Sasamoto S."/>
            <person name="Kimura T."/>
            <person name="Hosouchi T."/>
            <person name="Kawashima K."/>
            <person name="Kohara M."/>
            <person name="Matsumoto M."/>
            <person name="Matsuno A."/>
            <person name="Muraki A."/>
            <person name="Nakayama S."/>
            <person name="Nakazaki N."/>
            <person name="Naruo K."/>
            <person name="Okumura S."/>
            <person name="Shinpo S."/>
            <person name="Takeuchi C."/>
            <person name="Wada T."/>
            <person name="Watanabe A."/>
            <person name="Yamada M."/>
            <person name="Yasuda M."/>
            <person name="Sato S."/>
            <person name="de la Bastide M."/>
            <person name="Huang E."/>
            <person name="Spiegel L."/>
            <person name="Gnoj L."/>
            <person name="O'Shaughnessy A."/>
            <person name="Preston R."/>
            <person name="Habermann K."/>
            <person name="Murray J."/>
            <person name="Johnson D."/>
            <person name="Rohlfing T."/>
            <person name="Nelson J."/>
            <person name="Stoneking T."/>
            <person name="Pepin K."/>
            <person name="Spieth J."/>
            <person name="Sekhon M."/>
            <person name="Armstrong J."/>
            <person name="Becker M."/>
            <person name="Belter E."/>
            <person name="Cordum H."/>
            <person name="Cordes M."/>
            <person name="Courtney L."/>
            <person name="Courtney W."/>
            <person name="Dante M."/>
            <person name="Du H."/>
            <person name="Edwards J."/>
            <person name="Fryman J."/>
            <person name="Haakensen B."/>
            <person name="Lamar E."/>
            <person name="Latreille P."/>
            <person name="Leonard S."/>
            <person name="Meyer R."/>
            <person name="Mulvaney E."/>
            <person name="Ozersky P."/>
            <person name="Riley A."/>
            <person name="Strowmatt C."/>
            <person name="Wagner-McPherson C."/>
            <person name="Wollam A."/>
            <person name="Yoakum M."/>
            <person name="Bell M."/>
            <person name="Dedhia N."/>
            <person name="Parnell L."/>
            <person name="Shah R."/>
            <person name="Rodriguez M."/>
            <person name="Hoon See L."/>
            <person name="Vil D."/>
            <person name="Baker J."/>
            <person name="Kirchoff K."/>
            <person name="Toth K."/>
            <person name="King L."/>
            <person name="Bahret A."/>
            <person name="Miller B."/>
            <person name="Marra M.A."/>
            <person name="Martienssen R."/>
            <person name="McCombie W.R."/>
            <person name="Wilson R.K."/>
            <person name="Murphy G."/>
            <person name="Bancroft I."/>
            <person name="Volckaert G."/>
            <person name="Wambutt R."/>
            <person name="Duesterhoeft A."/>
            <person name="Stiekema W."/>
            <person name="Pohl T."/>
            <person name="Entian K.-D."/>
            <person name="Terryn N."/>
            <person name="Hartley N."/>
            <person name="Bent E."/>
            <person name="Johnson S."/>
            <person name="Langham S.-A."/>
            <person name="McCullagh B."/>
            <person name="Robben J."/>
            <person name="Grymonprez B."/>
            <person name="Zimmermann W."/>
            <person name="Ramsperger U."/>
            <person name="Wedler H."/>
            <person name="Balke K."/>
            <person name="Wedler E."/>
            <person name="Peters S."/>
            <person name="van Staveren M."/>
            <person name="Dirkse W."/>
            <person name="Mooijman P."/>
            <person name="Klein Lankhorst R."/>
            <person name="Weitzenegger T."/>
            <person name="Bothe G."/>
            <person name="Rose M."/>
            <person name="Hauf J."/>
            <person name="Berneiser S."/>
            <person name="Hempel S."/>
            <person name="Feldpausch M."/>
            <person name="Lamberth S."/>
            <person name="Villarroel R."/>
            <person name="Gielen J."/>
            <person name="Ardiles W."/>
            <person name="Bents O."/>
            <person name="Lemcke K."/>
            <person name="Kolesov G."/>
            <person name="Mayer K.F.X."/>
            <person name="Rudd S."/>
            <person name="Schoof H."/>
            <person name="Schueller C."/>
            <person name="Zaccaria P."/>
            <person name="Mewes H.-W."/>
            <person name="Bevan M."/>
            <person name="Fransz P.F."/>
        </authorList>
    </citation>
    <scope>NUCLEOTIDE SEQUENCE [LARGE SCALE GENOMIC DNA]</scope>
    <source>
        <strain>cv. Columbia</strain>
    </source>
</reference>
<reference key="2">
    <citation type="journal article" date="2017" name="Plant J.">
        <title>Araport11: a complete reannotation of the Arabidopsis thaliana reference genome.</title>
        <authorList>
            <person name="Cheng C.Y."/>
            <person name="Krishnakumar V."/>
            <person name="Chan A.P."/>
            <person name="Thibaud-Nissen F."/>
            <person name="Schobel S."/>
            <person name="Town C.D."/>
        </authorList>
    </citation>
    <scope>GENOME REANNOTATION</scope>
    <source>
        <strain>cv. Columbia</strain>
    </source>
</reference>
<reference key="3">
    <citation type="submission" date="2006-07" db="EMBL/GenBank/DDBJ databases">
        <title>Large-scale analysis of RIKEN Arabidopsis full-length (RAFL) cDNAs.</title>
        <authorList>
            <person name="Totoki Y."/>
            <person name="Seki M."/>
            <person name="Ishida J."/>
            <person name="Nakajima M."/>
            <person name="Enju A."/>
            <person name="Kamiya A."/>
            <person name="Narusaka M."/>
            <person name="Shin-i T."/>
            <person name="Nakagawa M."/>
            <person name="Sakamoto N."/>
            <person name="Oishi K."/>
            <person name="Kohara Y."/>
            <person name="Kobayashi M."/>
            <person name="Toyoda A."/>
            <person name="Sakaki Y."/>
            <person name="Sakurai T."/>
            <person name="Iida K."/>
            <person name="Akiyama K."/>
            <person name="Satou M."/>
            <person name="Toyoda T."/>
            <person name="Konagaya A."/>
            <person name="Carninci P."/>
            <person name="Kawai J."/>
            <person name="Hayashizaki Y."/>
            <person name="Shinozaki K."/>
        </authorList>
    </citation>
    <scope>NUCLEOTIDE SEQUENCE [LARGE SCALE MRNA]</scope>
    <source>
        <strain>cv. Columbia</strain>
    </source>
</reference>
<reference key="4">
    <citation type="journal article" date="2004" name="Plant Mol. Biol.">
        <title>Diversification of genes encoding mei2 -like RNA binding proteins in plants.</title>
        <authorList>
            <person name="Anderson G.H."/>
            <person name="Alvarez N.D."/>
            <person name="Gilman C."/>
            <person name="Jeffares D.C."/>
            <person name="Trainor V.C."/>
            <person name="Hanson M.R."/>
            <person name="Veit B."/>
        </authorList>
    </citation>
    <scope>GENE FAMILY</scope>
    <scope>DEVELOPMENTAL STAGE</scope>
</reference>
<reference key="5">
    <citation type="journal article" date="2005" name="BMC Plant Biol.">
        <title>The Arabidopsis Mei2 homologue AML1 binds AtRaptor1B, the plant homologue of a major regulator of eukaryotic cell growth.</title>
        <authorList>
            <person name="Anderson G.H."/>
            <person name="Hanson M.R."/>
        </authorList>
    </citation>
    <scope>FUNCTION</scope>
    <scope>DISRUPTION PHENOTYPE</scope>
</reference>
<reference key="6">
    <citation type="journal article" date="2006" name="Plant Cell">
        <title>The Arabidopsis-mei2-like genes play a role in meiosis and vegetative growth in Arabidopsis.</title>
        <authorList>
            <person name="Kaur J."/>
            <person name="Sebastian J."/>
            <person name="Siddiqi I."/>
        </authorList>
    </citation>
    <scope>FUNCTION</scope>
    <scope>TISSUE SPECIFICITY</scope>
</reference>
<feature type="chain" id="PRO_0000409344" description="Protein MEI2-like 4">
    <location>
        <begin position="1"/>
        <end position="907"/>
    </location>
</feature>
<feature type="domain" description="RRM 1" evidence="1">
    <location>
        <begin position="211"/>
        <end position="284"/>
    </location>
</feature>
<feature type="domain" description="RRM 2" evidence="1">
    <location>
        <begin position="295"/>
        <end position="368"/>
    </location>
</feature>
<feature type="region of interest" description="Disordered" evidence="2">
    <location>
        <begin position="28"/>
        <end position="58"/>
    </location>
</feature>
<feature type="region of interest" description="Disordered" evidence="2">
    <location>
        <begin position="856"/>
        <end position="907"/>
    </location>
</feature>
<feature type="compositionally biased region" description="Polar residues" evidence="2">
    <location>
        <begin position="44"/>
        <end position="54"/>
    </location>
</feature>
<feature type="compositionally biased region" description="Polar residues" evidence="2">
    <location>
        <begin position="883"/>
        <end position="894"/>
    </location>
</feature>
<gene>
    <name type="primary">ML4</name>
    <name type="ordered locus">At5g07290</name>
    <name type="ORF">T28J14.230</name>
</gene>
<name>AML4_ARATH</name>
<dbReference type="EMBL" id="AL163652">
    <property type="protein sequence ID" value="CAB87285.1"/>
    <property type="molecule type" value="Genomic_DNA"/>
</dbReference>
<dbReference type="EMBL" id="CP002688">
    <property type="protein sequence ID" value="AED91133.1"/>
    <property type="molecule type" value="Genomic_DNA"/>
</dbReference>
<dbReference type="EMBL" id="AK226960">
    <property type="protein sequence ID" value="BAE99028.1"/>
    <property type="molecule type" value="mRNA"/>
</dbReference>
<dbReference type="PIR" id="T48500">
    <property type="entry name" value="T48500"/>
</dbReference>
<dbReference type="RefSeq" id="NP_196346.1">
    <property type="nucleotide sequence ID" value="NM_120811.5"/>
</dbReference>
<dbReference type="SMR" id="Q9LYN7"/>
<dbReference type="FunCoup" id="Q9LYN7">
    <property type="interactions" value="424"/>
</dbReference>
<dbReference type="IntAct" id="Q9LYN7">
    <property type="interactions" value="1"/>
</dbReference>
<dbReference type="STRING" id="3702.Q9LYN7"/>
<dbReference type="GlyGen" id="Q9LYN7">
    <property type="glycosylation" value="3 sites, 1 O-linked glycan (3 sites)"/>
</dbReference>
<dbReference type="iPTMnet" id="Q9LYN7"/>
<dbReference type="PaxDb" id="3702-AT5G07290.1"/>
<dbReference type="ProteomicsDB" id="244402"/>
<dbReference type="EnsemblPlants" id="AT5G07290.1">
    <property type="protein sequence ID" value="AT5G07290.1"/>
    <property type="gene ID" value="AT5G07290"/>
</dbReference>
<dbReference type="GeneID" id="830620"/>
<dbReference type="Gramene" id="AT5G07290.1">
    <property type="protein sequence ID" value="AT5G07290.1"/>
    <property type="gene ID" value="AT5G07290"/>
</dbReference>
<dbReference type="KEGG" id="ath:AT5G07290"/>
<dbReference type="Araport" id="AT5G07290"/>
<dbReference type="TAIR" id="AT5G07290">
    <property type="gene designation" value="ML4"/>
</dbReference>
<dbReference type="eggNOG" id="KOG4660">
    <property type="taxonomic scope" value="Eukaryota"/>
</dbReference>
<dbReference type="HOGENOM" id="CLU_012447_1_0_1"/>
<dbReference type="InParanoid" id="Q9LYN7"/>
<dbReference type="OMA" id="MHNSVGS"/>
<dbReference type="PhylomeDB" id="Q9LYN7"/>
<dbReference type="PRO" id="PR:Q9LYN7"/>
<dbReference type="Proteomes" id="UP000006548">
    <property type="component" value="Chromosome 5"/>
</dbReference>
<dbReference type="ExpressionAtlas" id="Q9LYN7">
    <property type="expression patterns" value="baseline and differential"/>
</dbReference>
<dbReference type="GO" id="GO:0003729">
    <property type="term" value="F:mRNA binding"/>
    <property type="evidence" value="ECO:0000314"/>
    <property type="project" value="TAIR"/>
</dbReference>
<dbReference type="GO" id="GO:0051321">
    <property type="term" value="P:meiotic cell cycle"/>
    <property type="evidence" value="ECO:0007669"/>
    <property type="project" value="UniProtKB-KW"/>
</dbReference>
<dbReference type="GO" id="GO:0045927">
    <property type="term" value="P:positive regulation of growth"/>
    <property type="evidence" value="ECO:0000315"/>
    <property type="project" value="UniProtKB"/>
</dbReference>
<dbReference type="GO" id="GO:0045836">
    <property type="term" value="P:positive regulation of meiotic nuclear division"/>
    <property type="evidence" value="ECO:0000315"/>
    <property type="project" value="UniProtKB"/>
</dbReference>
<dbReference type="CDD" id="cd12524">
    <property type="entry name" value="RRM1_MEI2_like"/>
    <property type="match status" value="1"/>
</dbReference>
<dbReference type="CDD" id="cd12276">
    <property type="entry name" value="RRM2_MEI2_EAR1_like"/>
    <property type="match status" value="1"/>
</dbReference>
<dbReference type="CDD" id="cd12531">
    <property type="entry name" value="RRM3_MEI2_like"/>
    <property type="match status" value="1"/>
</dbReference>
<dbReference type="FunFam" id="3.30.70.330:FF:000101">
    <property type="entry name" value="Protein MEI2-like 1"/>
    <property type="match status" value="1"/>
</dbReference>
<dbReference type="FunFam" id="3.30.70.330:FF:000349">
    <property type="entry name" value="Protein MEI2-like 1"/>
    <property type="match status" value="1"/>
</dbReference>
<dbReference type="Gene3D" id="3.30.70.330">
    <property type="match status" value="2"/>
</dbReference>
<dbReference type="InterPro" id="IPR034453">
    <property type="entry name" value="MEI2-like_RRM1"/>
</dbReference>
<dbReference type="InterPro" id="IPR034454">
    <property type="entry name" value="MEI2-like_RRM3"/>
</dbReference>
<dbReference type="InterPro" id="IPR007201">
    <property type="entry name" value="Mei2-like_Rrm_C"/>
</dbReference>
<dbReference type="InterPro" id="IPR012677">
    <property type="entry name" value="Nucleotide-bd_a/b_plait_sf"/>
</dbReference>
<dbReference type="InterPro" id="IPR035979">
    <property type="entry name" value="RBD_domain_sf"/>
</dbReference>
<dbReference type="InterPro" id="IPR000504">
    <property type="entry name" value="RRM_dom"/>
</dbReference>
<dbReference type="PANTHER" id="PTHR23189">
    <property type="entry name" value="RNA RECOGNITION MOTIF-CONTAINING"/>
    <property type="match status" value="1"/>
</dbReference>
<dbReference type="Pfam" id="PF00076">
    <property type="entry name" value="RRM_1"/>
    <property type="match status" value="2"/>
</dbReference>
<dbReference type="Pfam" id="PF04059">
    <property type="entry name" value="RRM_2"/>
    <property type="match status" value="1"/>
</dbReference>
<dbReference type="SMART" id="SM00360">
    <property type="entry name" value="RRM"/>
    <property type="match status" value="3"/>
</dbReference>
<dbReference type="SUPFAM" id="SSF54928">
    <property type="entry name" value="RNA-binding domain, RBD"/>
    <property type="match status" value="2"/>
</dbReference>
<dbReference type="PROSITE" id="PS50102">
    <property type="entry name" value="RRM"/>
    <property type="match status" value="2"/>
</dbReference>
<sequence length="907" mass="99890">MPSDILEPRGVPTPSHFHEDIRITPEKQFGFMKNNPMPEGGVDRSSNLPTSSWTSDSYQLSQQSSLSGALPSFIPNGRTTTNDTHWESSLFSSSLSDLFSRKLRLPRSDKLAFMSANREEEPSESLEEMEAQTIGNLLPDEDDLFAEVVGEGVHKSRANGGDDLDDCDLFSSVGGMELDGDVFSSVSQRDGKRGSNVSTVAEHPQGEILSRILFVRNVDSSIEDCELGVLFKQFGDVRALHTAGKNRGFIMVSYYDIRAAQKAARALHGRLLRGRKLDIRYSIPKENPKENSSEGALWVNNLDSSISNEELHGIFSSYGEIREVRRTMHENSQVYIEFFDVRKAKVALQGLNGLEVAGRQLKLAPTCPEGTSFWPQFASDDGEGGLPKMAFNNLSSAHMGRHFPGILASTSIDGGSIRGMHNSVGSPMNSFIERHQSLDVPIGLPPSARVISASKPVGLQEFGNPFDNSKTGIQSMPNLHPHFPDYLDNFASGSPYKSSTTFSEMVSDGQKANEGFMMSNVRGVGVDGFNGGVIGSPINQGSHRGNLNLWSNSNSQQHNQSSGMMWPNSPSRVNGVPSQRIPPVTAFSRASPLMVNMASSPVHHHIGSAPVLNSPFWDRRQAYVAESPESSGFHLGSPGSMGFPGSSPSHPMDFGSHKVFSHVGGNRMEANSKNAVLRSSRQMPHLFTGRSPMLSVSGSFDLPNERYRNLSHRRSESNSSNAEKKLYELDVDRILRGEDSRTTLMIKNIPNKYTSKMLLAAIDEYCKGTYDFLYLPIDFKNKCNVGYAFINLIEPENIVPFYKAFNGKKWEKFNSEKVASLAYGRIQGKSALIAHFQNSSLMNEDKRCRPILFHTAGPNAGDQEPFPMGSNIRSRPGKHRTNSIENYTNFSSSSDNRDEPANGNDSM</sequence>
<comment type="function">
    <text evidence="4 5">Probable RNA-binding protein that plays a role in meiosis and vegetative growth.</text>
</comment>
<comment type="developmental stage">
    <text evidence="3">Expressed throughout the meristem during embryonic and vegetative development. Expressed in floral organogenic regions.</text>
</comment>
<comment type="disruption phenotype">
    <text evidence="4">Early flowering.</text>
</comment>
<organism>
    <name type="scientific">Arabidopsis thaliana</name>
    <name type="common">Mouse-ear cress</name>
    <dbReference type="NCBI Taxonomy" id="3702"/>
    <lineage>
        <taxon>Eukaryota</taxon>
        <taxon>Viridiplantae</taxon>
        <taxon>Streptophyta</taxon>
        <taxon>Embryophyta</taxon>
        <taxon>Tracheophyta</taxon>
        <taxon>Spermatophyta</taxon>
        <taxon>Magnoliopsida</taxon>
        <taxon>eudicotyledons</taxon>
        <taxon>Gunneridae</taxon>
        <taxon>Pentapetalae</taxon>
        <taxon>rosids</taxon>
        <taxon>malvids</taxon>
        <taxon>Brassicales</taxon>
        <taxon>Brassicaceae</taxon>
        <taxon>Camelineae</taxon>
        <taxon>Arabidopsis</taxon>
    </lineage>
</organism>
<proteinExistence type="evidence at transcript level"/>
<keyword id="KW-0469">Meiosis</keyword>
<keyword id="KW-1185">Reference proteome</keyword>
<keyword id="KW-0677">Repeat</keyword>
<keyword id="KW-0694">RNA-binding</keyword>